<protein>
    <recommendedName>
        <fullName evidence="2">Formamidopyrimidine-DNA glycosylase</fullName>
        <shortName evidence="2">Fapy-DNA glycosylase</shortName>
        <ecNumber evidence="2">3.2.2.23</ecNumber>
    </recommendedName>
    <alternativeName>
        <fullName evidence="2">DNA-(apurinic or apyrimidinic site) lyase MutM</fullName>
        <shortName evidence="2">AP lyase MutM</shortName>
        <ecNumber evidence="2">4.2.99.18</ecNumber>
    </alternativeName>
</protein>
<dbReference type="EC" id="3.2.2.23" evidence="2"/>
<dbReference type="EC" id="4.2.99.18" evidence="2"/>
<dbReference type="EMBL" id="CP000753">
    <property type="protein sequence ID" value="ABS10438.1"/>
    <property type="molecule type" value="Genomic_DNA"/>
</dbReference>
<dbReference type="RefSeq" id="WP_011845381.1">
    <property type="nucleotide sequence ID" value="NC_009665.1"/>
</dbReference>
<dbReference type="SMR" id="A6WUE9"/>
<dbReference type="KEGG" id="sbm:Shew185_4324"/>
<dbReference type="HOGENOM" id="CLU_038423_1_1_6"/>
<dbReference type="GO" id="GO:0034039">
    <property type="term" value="F:8-oxo-7,8-dihydroguanine DNA N-glycosylase activity"/>
    <property type="evidence" value="ECO:0007669"/>
    <property type="project" value="TreeGrafter"/>
</dbReference>
<dbReference type="GO" id="GO:0140078">
    <property type="term" value="F:class I DNA-(apurinic or apyrimidinic site) endonuclease activity"/>
    <property type="evidence" value="ECO:0007669"/>
    <property type="project" value="UniProtKB-EC"/>
</dbReference>
<dbReference type="GO" id="GO:0003684">
    <property type="term" value="F:damaged DNA binding"/>
    <property type="evidence" value="ECO:0007669"/>
    <property type="project" value="InterPro"/>
</dbReference>
<dbReference type="GO" id="GO:0008270">
    <property type="term" value="F:zinc ion binding"/>
    <property type="evidence" value="ECO:0007669"/>
    <property type="project" value="UniProtKB-UniRule"/>
</dbReference>
<dbReference type="GO" id="GO:0006284">
    <property type="term" value="P:base-excision repair"/>
    <property type="evidence" value="ECO:0007669"/>
    <property type="project" value="InterPro"/>
</dbReference>
<dbReference type="CDD" id="cd08966">
    <property type="entry name" value="EcFpg-like_N"/>
    <property type="match status" value="1"/>
</dbReference>
<dbReference type="FunFam" id="1.10.8.50:FF:000003">
    <property type="entry name" value="Formamidopyrimidine-DNA glycosylase"/>
    <property type="match status" value="1"/>
</dbReference>
<dbReference type="FunFam" id="3.20.190.10:FF:000001">
    <property type="entry name" value="Formamidopyrimidine-DNA glycosylase"/>
    <property type="match status" value="1"/>
</dbReference>
<dbReference type="Gene3D" id="1.10.8.50">
    <property type="match status" value="1"/>
</dbReference>
<dbReference type="Gene3D" id="3.20.190.10">
    <property type="entry name" value="MutM-like, N-terminal"/>
    <property type="match status" value="1"/>
</dbReference>
<dbReference type="HAMAP" id="MF_00103">
    <property type="entry name" value="Fapy_DNA_glycosyl"/>
    <property type="match status" value="1"/>
</dbReference>
<dbReference type="InterPro" id="IPR015886">
    <property type="entry name" value="DNA_glyclase/AP_lyase_DNA-bd"/>
</dbReference>
<dbReference type="InterPro" id="IPR015887">
    <property type="entry name" value="DNA_glyclase_Znf_dom_DNA_BS"/>
</dbReference>
<dbReference type="InterPro" id="IPR020629">
    <property type="entry name" value="Formamido-pyr_DNA_Glyclase"/>
</dbReference>
<dbReference type="InterPro" id="IPR012319">
    <property type="entry name" value="FPG_cat"/>
</dbReference>
<dbReference type="InterPro" id="IPR035937">
    <property type="entry name" value="MutM-like_N-ter"/>
</dbReference>
<dbReference type="InterPro" id="IPR010979">
    <property type="entry name" value="Ribosomal_uS13-like_H2TH"/>
</dbReference>
<dbReference type="InterPro" id="IPR000214">
    <property type="entry name" value="Znf_DNA_glyclase/AP_lyase"/>
</dbReference>
<dbReference type="InterPro" id="IPR010663">
    <property type="entry name" value="Znf_FPG/IleRS"/>
</dbReference>
<dbReference type="NCBIfam" id="TIGR00577">
    <property type="entry name" value="fpg"/>
    <property type="match status" value="1"/>
</dbReference>
<dbReference type="NCBIfam" id="NF002211">
    <property type="entry name" value="PRK01103.1"/>
    <property type="match status" value="1"/>
</dbReference>
<dbReference type="PANTHER" id="PTHR22993">
    <property type="entry name" value="FORMAMIDOPYRIMIDINE-DNA GLYCOSYLASE"/>
    <property type="match status" value="1"/>
</dbReference>
<dbReference type="PANTHER" id="PTHR22993:SF9">
    <property type="entry name" value="FORMAMIDOPYRIMIDINE-DNA GLYCOSYLASE"/>
    <property type="match status" value="1"/>
</dbReference>
<dbReference type="Pfam" id="PF01149">
    <property type="entry name" value="Fapy_DNA_glyco"/>
    <property type="match status" value="1"/>
</dbReference>
<dbReference type="Pfam" id="PF06831">
    <property type="entry name" value="H2TH"/>
    <property type="match status" value="1"/>
</dbReference>
<dbReference type="Pfam" id="PF06827">
    <property type="entry name" value="zf-FPG_IleRS"/>
    <property type="match status" value="1"/>
</dbReference>
<dbReference type="SMART" id="SM00898">
    <property type="entry name" value="Fapy_DNA_glyco"/>
    <property type="match status" value="1"/>
</dbReference>
<dbReference type="SMART" id="SM01232">
    <property type="entry name" value="H2TH"/>
    <property type="match status" value="1"/>
</dbReference>
<dbReference type="SUPFAM" id="SSF57716">
    <property type="entry name" value="Glucocorticoid receptor-like (DNA-binding domain)"/>
    <property type="match status" value="1"/>
</dbReference>
<dbReference type="SUPFAM" id="SSF81624">
    <property type="entry name" value="N-terminal domain of MutM-like DNA repair proteins"/>
    <property type="match status" value="1"/>
</dbReference>
<dbReference type="SUPFAM" id="SSF46946">
    <property type="entry name" value="S13-like H2TH domain"/>
    <property type="match status" value="1"/>
</dbReference>
<dbReference type="PROSITE" id="PS51068">
    <property type="entry name" value="FPG_CAT"/>
    <property type="match status" value="1"/>
</dbReference>
<dbReference type="PROSITE" id="PS01242">
    <property type="entry name" value="ZF_FPG_1"/>
    <property type="match status" value="1"/>
</dbReference>
<dbReference type="PROSITE" id="PS51066">
    <property type="entry name" value="ZF_FPG_2"/>
    <property type="match status" value="1"/>
</dbReference>
<accession>A6WUE9</accession>
<proteinExistence type="inferred from homology"/>
<feature type="initiator methionine" description="Removed" evidence="1">
    <location>
        <position position="1"/>
    </location>
</feature>
<feature type="chain" id="PRO_1000008771" description="Formamidopyrimidine-DNA glycosylase">
    <location>
        <begin position="2"/>
        <end position="271"/>
    </location>
</feature>
<feature type="zinc finger region" description="FPG-type" evidence="2">
    <location>
        <begin position="236"/>
        <end position="270"/>
    </location>
</feature>
<feature type="active site" description="Schiff-base intermediate with DNA" evidence="2">
    <location>
        <position position="2"/>
    </location>
</feature>
<feature type="active site" description="Proton donor" evidence="2">
    <location>
        <position position="3"/>
    </location>
</feature>
<feature type="active site" description="Proton donor; for beta-elimination activity" evidence="2">
    <location>
        <position position="57"/>
    </location>
</feature>
<feature type="active site" description="Proton donor; for delta-elimination activity" evidence="2">
    <location>
        <position position="260"/>
    </location>
</feature>
<feature type="binding site" evidence="2">
    <location>
        <position position="90"/>
    </location>
    <ligand>
        <name>DNA</name>
        <dbReference type="ChEBI" id="CHEBI:16991"/>
    </ligand>
</feature>
<feature type="binding site" evidence="2">
    <location>
        <position position="109"/>
    </location>
    <ligand>
        <name>DNA</name>
        <dbReference type="ChEBI" id="CHEBI:16991"/>
    </ligand>
</feature>
<feature type="binding site" evidence="2">
    <location>
        <position position="151"/>
    </location>
    <ligand>
        <name>DNA</name>
        <dbReference type="ChEBI" id="CHEBI:16991"/>
    </ligand>
</feature>
<evidence type="ECO:0000250" key="1"/>
<evidence type="ECO:0000255" key="2">
    <source>
        <dbReference type="HAMAP-Rule" id="MF_00103"/>
    </source>
</evidence>
<keyword id="KW-0227">DNA damage</keyword>
<keyword id="KW-0234">DNA repair</keyword>
<keyword id="KW-0238">DNA-binding</keyword>
<keyword id="KW-0326">Glycosidase</keyword>
<keyword id="KW-0378">Hydrolase</keyword>
<keyword id="KW-0456">Lyase</keyword>
<keyword id="KW-0479">Metal-binding</keyword>
<keyword id="KW-0511">Multifunctional enzyme</keyword>
<keyword id="KW-0862">Zinc</keyword>
<keyword id="KW-0863">Zinc-finger</keyword>
<sequence length="271" mass="29697">MPELPEVEVTRQGIAPFLVEQTVVDLVIRNGSLRWPVPDIAKQIIGQVIRQVRRRAKYLLIDTDAGTSIVHLGMSGSLRILPHDTPVEKHDHIDLVLANGRILRFNDPRRFGAWLWCELPEEAHPLLAKLGPEPLTQAFNVAQLAAALAGKKKAIKLCLMDNHIVVGVGNIYANEALFAAGIHPEAEAGKIDIERLTVLVAEVKQILAHAIKQGGTTLKDFTNADGKPGYFAQKLHVYGRGGETCTSCGNLLSEIRLGQRTTVFCGICQTR</sequence>
<comment type="function">
    <text evidence="2">Involved in base excision repair of DNA damaged by oxidation or by mutagenic agents. Acts as a DNA glycosylase that recognizes and removes damaged bases. Has a preference for oxidized purines, such as 7,8-dihydro-8-oxoguanine (8-oxoG). Has AP (apurinic/apyrimidinic) lyase activity and introduces nicks in the DNA strand. Cleaves the DNA backbone by beta-delta elimination to generate a single-strand break at the site of the removed base with both 3'- and 5'-phosphates.</text>
</comment>
<comment type="catalytic activity">
    <reaction evidence="2">
        <text>Hydrolysis of DNA containing ring-opened 7-methylguanine residues, releasing 2,6-diamino-4-hydroxy-5-(N-methyl)formamidopyrimidine.</text>
        <dbReference type="EC" id="3.2.2.23"/>
    </reaction>
</comment>
<comment type="catalytic activity">
    <reaction evidence="2">
        <text>2'-deoxyribonucleotide-(2'-deoxyribose 5'-phosphate)-2'-deoxyribonucleotide-DNA = a 3'-end 2'-deoxyribonucleotide-(2,3-dehydro-2,3-deoxyribose 5'-phosphate)-DNA + a 5'-end 5'-phospho-2'-deoxyribonucleoside-DNA + H(+)</text>
        <dbReference type="Rhea" id="RHEA:66592"/>
        <dbReference type="Rhea" id="RHEA-COMP:13180"/>
        <dbReference type="Rhea" id="RHEA-COMP:16897"/>
        <dbReference type="Rhea" id="RHEA-COMP:17067"/>
        <dbReference type="ChEBI" id="CHEBI:15378"/>
        <dbReference type="ChEBI" id="CHEBI:136412"/>
        <dbReference type="ChEBI" id="CHEBI:157695"/>
        <dbReference type="ChEBI" id="CHEBI:167181"/>
        <dbReference type="EC" id="4.2.99.18"/>
    </reaction>
</comment>
<comment type="cofactor">
    <cofactor evidence="2">
        <name>Zn(2+)</name>
        <dbReference type="ChEBI" id="CHEBI:29105"/>
    </cofactor>
    <text evidence="2">Binds 1 zinc ion per subunit.</text>
</comment>
<comment type="subunit">
    <text evidence="2">Monomer.</text>
</comment>
<comment type="similarity">
    <text evidence="2">Belongs to the FPG family.</text>
</comment>
<organism>
    <name type="scientific">Shewanella baltica (strain OS185)</name>
    <dbReference type="NCBI Taxonomy" id="402882"/>
    <lineage>
        <taxon>Bacteria</taxon>
        <taxon>Pseudomonadati</taxon>
        <taxon>Pseudomonadota</taxon>
        <taxon>Gammaproteobacteria</taxon>
        <taxon>Alteromonadales</taxon>
        <taxon>Shewanellaceae</taxon>
        <taxon>Shewanella</taxon>
    </lineage>
</organism>
<name>FPG_SHEB8</name>
<gene>
    <name evidence="2" type="primary">mutM</name>
    <name evidence="2" type="synonym">fpg</name>
    <name type="ordered locus">Shew185_4324</name>
</gene>
<reference key="1">
    <citation type="submission" date="2007-07" db="EMBL/GenBank/DDBJ databases">
        <title>Complete sequence of chromosome of Shewanella baltica OS185.</title>
        <authorList>
            <consortium name="US DOE Joint Genome Institute"/>
            <person name="Copeland A."/>
            <person name="Lucas S."/>
            <person name="Lapidus A."/>
            <person name="Barry K."/>
            <person name="Glavina del Rio T."/>
            <person name="Dalin E."/>
            <person name="Tice H."/>
            <person name="Pitluck S."/>
            <person name="Sims D."/>
            <person name="Brettin T."/>
            <person name="Bruce D."/>
            <person name="Detter J.C."/>
            <person name="Han C."/>
            <person name="Schmutz J."/>
            <person name="Larimer F."/>
            <person name="Land M."/>
            <person name="Hauser L."/>
            <person name="Kyrpides N."/>
            <person name="Mikhailova N."/>
            <person name="Brettar I."/>
            <person name="Rodrigues J."/>
            <person name="Konstantinidis K."/>
            <person name="Tiedje J."/>
            <person name="Richardson P."/>
        </authorList>
    </citation>
    <scope>NUCLEOTIDE SEQUENCE [LARGE SCALE GENOMIC DNA]</scope>
    <source>
        <strain>OS185</strain>
    </source>
</reference>